<proteinExistence type="evidence at protein level"/>
<sequence>MSNGYEDHMAEDCRDDIGRTNLIVNYLPQNMTQEELRSLFSSIGEVESAKLIRDKVAGHSLGYGFVNYVTAKDAERAISTLNGLRLQSKTIKVSYARPSSEVIKDANLYISGLPRTMTQKDVEDMFSRFGRIINSRVLVDQTTGLSRGVAFIRFDKRSEAEEAITSFNGHKPPGSSEPITVKFAANPNQNKNMALLSQLYHSPARRFGGPVHHQAQRFRFSPMGVDHMSGISGVNVPGNASSGWCIFIYNLGQDADEGILWQMFGPFGAVTNVKVIRDFNTNKCKGFGFVTMTNYEEAAMAIASLNGYRLGDKILQVSFKTNKSHK</sequence>
<accession>B5DF91</accession>
<organism evidence="6">
    <name type="scientific">Rattus norvegicus</name>
    <name type="common">Rat</name>
    <dbReference type="NCBI Taxonomy" id="10116"/>
    <lineage>
        <taxon>Eukaryota</taxon>
        <taxon>Metazoa</taxon>
        <taxon>Chordata</taxon>
        <taxon>Craniata</taxon>
        <taxon>Vertebrata</taxon>
        <taxon>Euteleostomi</taxon>
        <taxon>Mammalia</taxon>
        <taxon>Eutheria</taxon>
        <taxon>Euarchontoglires</taxon>
        <taxon>Glires</taxon>
        <taxon>Rodentia</taxon>
        <taxon>Myomorpha</taxon>
        <taxon>Muroidea</taxon>
        <taxon>Muridae</taxon>
        <taxon>Murinae</taxon>
        <taxon>Rattus</taxon>
    </lineage>
</organism>
<keyword id="KW-0007">Acetylation</keyword>
<keyword id="KW-0963">Cytoplasm</keyword>
<keyword id="KW-1017">Isopeptide bond</keyword>
<keyword id="KW-0488">Methylation</keyword>
<keyword id="KW-0539">Nucleus</keyword>
<keyword id="KW-0597">Phosphoprotein</keyword>
<keyword id="KW-1185">Reference proteome</keyword>
<keyword id="KW-0677">Repeat</keyword>
<keyword id="KW-0694">RNA-binding</keyword>
<keyword id="KW-0832">Ubl conjugation</keyword>
<gene>
    <name evidence="8" type="primary">Elavl1</name>
    <name evidence="7" type="synonym">Hur</name>
</gene>
<evidence type="ECO:0000250" key="1">
    <source>
        <dbReference type="UniProtKB" id="P70372"/>
    </source>
</evidence>
<evidence type="ECO:0000250" key="2">
    <source>
        <dbReference type="UniProtKB" id="Q15717"/>
    </source>
</evidence>
<evidence type="ECO:0000255" key="3">
    <source>
        <dbReference type="PROSITE-ProRule" id="PRU00176"/>
    </source>
</evidence>
<evidence type="ECO:0000269" key="4">
    <source>
    </source>
</evidence>
<evidence type="ECO:0000305" key="5"/>
<evidence type="ECO:0000312" key="6">
    <source>
        <dbReference type="EMBL" id="AAI68972.1"/>
    </source>
</evidence>
<evidence type="ECO:0000312" key="7">
    <source>
        <dbReference type="EMBL" id="BAG72208.1"/>
    </source>
</evidence>
<evidence type="ECO:0000312" key="8">
    <source>
        <dbReference type="RGD" id="1308649"/>
    </source>
</evidence>
<evidence type="ECO:0007744" key="9">
    <source>
    </source>
</evidence>
<feature type="initiator methionine" description="Removed" evidence="2">
    <location>
        <position position="1"/>
    </location>
</feature>
<feature type="chain" id="PRO_0000436065" description="ELAV-like protein 1">
    <location>
        <begin position="2"/>
        <end position="326"/>
    </location>
</feature>
<feature type="domain" description="RRM 1" evidence="3">
    <location>
        <begin position="20"/>
        <end position="98"/>
    </location>
</feature>
<feature type="domain" description="RRM 2" evidence="3">
    <location>
        <begin position="106"/>
        <end position="186"/>
    </location>
</feature>
<feature type="domain" description="RRM 3" evidence="3">
    <location>
        <begin position="244"/>
        <end position="322"/>
    </location>
</feature>
<feature type="modified residue" description="N-acetylserine" evidence="2">
    <location>
        <position position="2"/>
    </location>
</feature>
<feature type="modified residue" description="Phosphoserine" evidence="2">
    <location>
        <position position="2"/>
    </location>
</feature>
<feature type="modified residue" description="Phosphoserine" evidence="2">
    <location>
        <position position="100"/>
    </location>
</feature>
<feature type="modified residue" description="Phosphoserine" evidence="2">
    <location>
        <position position="158"/>
    </location>
</feature>
<feature type="modified residue" description="Phosphoserine" evidence="2">
    <location>
        <position position="197"/>
    </location>
</feature>
<feature type="modified residue" description="Phosphoserine" evidence="9">
    <location>
        <position position="202"/>
    </location>
</feature>
<feature type="modified residue" description="Omega-N-methylarginine" evidence="1">
    <location>
        <position position="206"/>
    </location>
</feature>
<feature type="modified residue" description="Asymmetric dimethylarginine; by CARM1; alternate" evidence="2">
    <location>
        <position position="217"/>
    </location>
</feature>
<feature type="modified residue" description="Omega-N-methylarginine; alternate" evidence="2">
    <location>
        <position position="217"/>
    </location>
</feature>
<feature type="modified residue" description="Phosphoserine" evidence="2">
    <location>
        <position position="221"/>
    </location>
</feature>
<feature type="modified residue" description="Phosphoserine" evidence="2">
    <location>
        <position position="318"/>
    </location>
</feature>
<feature type="cross-link" description="Glycyl lysine isopeptide (Lys-Gly) (interchain with G-Cter in SUMO2)" evidence="2">
    <location>
        <position position="191"/>
    </location>
</feature>
<reference evidence="7" key="1">
    <citation type="journal article" date="2008" name="Hepatology">
        <title>Natural antisense transcript stabilizes inducible nitric oxide synthase messenger RNA in rat hepatocytes.</title>
        <authorList>
            <person name="Matsui K."/>
            <person name="Nishizawa M."/>
            <person name="Ozaki T."/>
            <person name="Kimura T."/>
            <person name="Hashimoto I."/>
            <person name="Yamada M."/>
            <person name="Kaibori M."/>
            <person name="Kamiyama Y."/>
            <person name="Ito S."/>
            <person name="Okumura T."/>
        </authorList>
    </citation>
    <scope>NUCLEOTIDE SEQUENCE [MRNA]</scope>
    <scope>INTERACTION WITH HNRNPL</scope>
    <scope>SUBCELLULAR LOCATION</scope>
    <scope>RNA-BINDING</scope>
</reference>
<reference key="2">
    <citation type="journal article" date="2004" name="Nature">
        <title>Genome sequence of the Brown Norway rat yields insights into mammalian evolution.</title>
        <authorList>
            <person name="Gibbs R.A."/>
            <person name="Weinstock G.M."/>
            <person name="Metzker M.L."/>
            <person name="Muzny D.M."/>
            <person name="Sodergren E.J."/>
            <person name="Scherer S."/>
            <person name="Scott G."/>
            <person name="Steffen D."/>
            <person name="Worley K.C."/>
            <person name="Burch P.E."/>
            <person name="Okwuonu G."/>
            <person name="Hines S."/>
            <person name="Lewis L."/>
            <person name="Deramo C."/>
            <person name="Delgado O."/>
            <person name="Dugan-Rocha S."/>
            <person name="Miner G."/>
            <person name="Morgan M."/>
            <person name="Hawes A."/>
            <person name="Gill R."/>
            <person name="Holt R.A."/>
            <person name="Adams M.D."/>
            <person name="Amanatides P.G."/>
            <person name="Baden-Tillson H."/>
            <person name="Barnstead M."/>
            <person name="Chin S."/>
            <person name="Evans C.A."/>
            <person name="Ferriera S."/>
            <person name="Fosler C."/>
            <person name="Glodek A."/>
            <person name="Gu Z."/>
            <person name="Jennings D."/>
            <person name="Kraft C.L."/>
            <person name="Nguyen T."/>
            <person name="Pfannkoch C.M."/>
            <person name="Sitter C."/>
            <person name="Sutton G.G."/>
            <person name="Venter J.C."/>
            <person name="Woodage T."/>
            <person name="Smith D."/>
            <person name="Lee H.-M."/>
            <person name="Gustafson E."/>
            <person name="Cahill P."/>
            <person name="Kana A."/>
            <person name="Doucette-Stamm L."/>
            <person name="Weinstock K."/>
            <person name="Fechtel K."/>
            <person name="Weiss R.B."/>
            <person name="Dunn D.M."/>
            <person name="Green E.D."/>
            <person name="Blakesley R.W."/>
            <person name="Bouffard G.G."/>
            <person name="De Jong P.J."/>
            <person name="Osoegawa K."/>
            <person name="Zhu B."/>
            <person name="Marra M."/>
            <person name="Schein J."/>
            <person name="Bosdet I."/>
            <person name="Fjell C."/>
            <person name="Jones S."/>
            <person name="Krzywinski M."/>
            <person name="Mathewson C."/>
            <person name="Siddiqui A."/>
            <person name="Wye N."/>
            <person name="McPherson J."/>
            <person name="Zhao S."/>
            <person name="Fraser C.M."/>
            <person name="Shetty J."/>
            <person name="Shatsman S."/>
            <person name="Geer K."/>
            <person name="Chen Y."/>
            <person name="Abramzon S."/>
            <person name="Nierman W.C."/>
            <person name="Havlak P.H."/>
            <person name="Chen R."/>
            <person name="Durbin K.J."/>
            <person name="Egan A."/>
            <person name="Ren Y."/>
            <person name="Song X.-Z."/>
            <person name="Li B."/>
            <person name="Liu Y."/>
            <person name="Qin X."/>
            <person name="Cawley S."/>
            <person name="Cooney A.J."/>
            <person name="D'Souza L.M."/>
            <person name="Martin K."/>
            <person name="Wu J.Q."/>
            <person name="Gonzalez-Garay M.L."/>
            <person name="Jackson A.R."/>
            <person name="Kalafus K.J."/>
            <person name="McLeod M.P."/>
            <person name="Milosavljevic A."/>
            <person name="Virk D."/>
            <person name="Volkov A."/>
            <person name="Wheeler D.A."/>
            <person name="Zhang Z."/>
            <person name="Bailey J.A."/>
            <person name="Eichler E.E."/>
            <person name="Tuzun E."/>
            <person name="Birney E."/>
            <person name="Mongin E."/>
            <person name="Ureta-Vidal A."/>
            <person name="Woodwark C."/>
            <person name="Zdobnov E."/>
            <person name="Bork P."/>
            <person name="Suyama M."/>
            <person name="Torrents D."/>
            <person name="Alexandersson M."/>
            <person name="Trask B.J."/>
            <person name="Young J.M."/>
            <person name="Huang H."/>
            <person name="Wang H."/>
            <person name="Xing H."/>
            <person name="Daniels S."/>
            <person name="Gietzen D."/>
            <person name="Schmidt J."/>
            <person name="Stevens K."/>
            <person name="Vitt U."/>
            <person name="Wingrove J."/>
            <person name="Camara F."/>
            <person name="Mar Alba M."/>
            <person name="Abril J.F."/>
            <person name="Guigo R."/>
            <person name="Smit A."/>
            <person name="Dubchak I."/>
            <person name="Rubin E.M."/>
            <person name="Couronne O."/>
            <person name="Poliakov A."/>
            <person name="Huebner N."/>
            <person name="Ganten D."/>
            <person name="Goesele C."/>
            <person name="Hummel O."/>
            <person name="Kreitler T."/>
            <person name="Lee Y.-A."/>
            <person name="Monti J."/>
            <person name="Schulz H."/>
            <person name="Zimdahl H."/>
            <person name="Himmelbauer H."/>
            <person name="Lehrach H."/>
            <person name="Jacob H.J."/>
            <person name="Bromberg S."/>
            <person name="Gullings-Handley J."/>
            <person name="Jensen-Seaman M.I."/>
            <person name="Kwitek A.E."/>
            <person name="Lazar J."/>
            <person name="Pasko D."/>
            <person name="Tonellato P.J."/>
            <person name="Twigger S."/>
            <person name="Ponting C.P."/>
            <person name="Duarte J.M."/>
            <person name="Rice S."/>
            <person name="Goodstadt L."/>
            <person name="Beatson S.A."/>
            <person name="Emes R.D."/>
            <person name="Winter E.E."/>
            <person name="Webber C."/>
            <person name="Brandt P."/>
            <person name="Nyakatura G."/>
            <person name="Adetobi M."/>
            <person name="Chiaromonte F."/>
            <person name="Elnitski L."/>
            <person name="Eswara P."/>
            <person name="Hardison R.C."/>
            <person name="Hou M."/>
            <person name="Kolbe D."/>
            <person name="Makova K."/>
            <person name="Miller W."/>
            <person name="Nekrutenko A."/>
            <person name="Riemer C."/>
            <person name="Schwartz S."/>
            <person name="Taylor J."/>
            <person name="Yang S."/>
            <person name="Zhang Y."/>
            <person name="Lindpaintner K."/>
            <person name="Andrews T.D."/>
            <person name="Caccamo M."/>
            <person name="Clamp M."/>
            <person name="Clarke L."/>
            <person name="Curwen V."/>
            <person name="Durbin R.M."/>
            <person name="Eyras E."/>
            <person name="Searle S.M."/>
            <person name="Cooper G.M."/>
            <person name="Batzoglou S."/>
            <person name="Brudno M."/>
            <person name="Sidow A."/>
            <person name="Stone E.A."/>
            <person name="Payseur B.A."/>
            <person name="Bourque G."/>
            <person name="Lopez-Otin C."/>
            <person name="Puente X.S."/>
            <person name="Chakrabarti K."/>
            <person name="Chatterji S."/>
            <person name="Dewey C."/>
            <person name="Pachter L."/>
            <person name="Bray N."/>
            <person name="Yap V.B."/>
            <person name="Caspi A."/>
            <person name="Tesler G."/>
            <person name="Pevzner P.A."/>
            <person name="Haussler D."/>
            <person name="Roskin K.M."/>
            <person name="Baertsch R."/>
            <person name="Clawson H."/>
            <person name="Furey T.S."/>
            <person name="Hinrichs A.S."/>
            <person name="Karolchik D."/>
            <person name="Kent W.J."/>
            <person name="Rosenbloom K.R."/>
            <person name="Trumbower H."/>
            <person name="Weirauch M."/>
            <person name="Cooper D.N."/>
            <person name="Stenson P.D."/>
            <person name="Ma B."/>
            <person name="Brent M."/>
            <person name="Arumugam M."/>
            <person name="Shteynberg D."/>
            <person name="Copley R.R."/>
            <person name="Taylor M.S."/>
            <person name="Riethman H."/>
            <person name="Mudunuri U."/>
            <person name="Peterson J."/>
            <person name="Guyer M."/>
            <person name="Felsenfeld A."/>
            <person name="Old S."/>
            <person name="Mockrin S."/>
            <person name="Collins F.S."/>
        </authorList>
    </citation>
    <scope>NUCLEOTIDE SEQUENCE [LARGE SCALE GENOMIC DNA]</scope>
    <source>
        <strain>Brown Norway</strain>
    </source>
</reference>
<reference key="3">
    <citation type="submission" date="2005-07" db="EMBL/GenBank/DDBJ databases">
        <authorList>
            <person name="Mural R.J."/>
            <person name="Adams M.D."/>
            <person name="Myers E.W."/>
            <person name="Smith H.O."/>
            <person name="Venter J.C."/>
        </authorList>
    </citation>
    <scope>NUCLEOTIDE SEQUENCE [LARGE SCALE GENOMIC DNA]</scope>
</reference>
<reference key="4">
    <citation type="journal article" date="2004" name="Genome Res.">
        <title>The status, quality, and expansion of the NIH full-length cDNA project: the Mammalian Gene Collection (MGC).</title>
        <authorList>
            <consortium name="The MGC Project Team"/>
        </authorList>
    </citation>
    <scope>NUCLEOTIDE SEQUENCE [LARGE SCALE MRNA]</scope>
    <source>
        <tissue evidence="6">Heart</tissue>
    </source>
</reference>
<reference key="5">
    <citation type="journal article" date="2012" name="Nat. Commun.">
        <title>Quantitative maps of protein phosphorylation sites across 14 different rat organs and tissues.</title>
        <authorList>
            <person name="Lundby A."/>
            <person name="Secher A."/>
            <person name="Lage K."/>
            <person name="Nordsborg N.B."/>
            <person name="Dmytriyev A."/>
            <person name="Lundby C."/>
            <person name="Olsen J.V."/>
        </authorList>
    </citation>
    <scope>PHOSPHORYLATION [LARGE SCALE ANALYSIS] AT SER-202</scope>
    <scope>IDENTIFICATION BY MASS SPECTROMETRY [LARGE SCALE ANALYSIS]</scope>
</reference>
<protein>
    <recommendedName>
        <fullName evidence="5">ELAV-like protein 1</fullName>
    </recommendedName>
    <alternativeName>
        <fullName>Hu-antigen R</fullName>
        <shortName>HuR</shortName>
    </alternativeName>
</protein>
<name>ELAV1_RAT</name>
<dbReference type="EMBL" id="AB212679">
    <property type="protein sequence ID" value="BAG72208.1"/>
    <property type="molecule type" value="mRNA"/>
</dbReference>
<dbReference type="EMBL" id="AABR07034979">
    <property type="status" value="NOT_ANNOTATED_CDS"/>
    <property type="molecule type" value="Genomic_DNA"/>
</dbReference>
<dbReference type="EMBL" id="CH474084">
    <property type="protein sequence ID" value="EDL75000.1"/>
    <property type="molecule type" value="Genomic_DNA"/>
</dbReference>
<dbReference type="EMBL" id="CH474084">
    <property type="protein sequence ID" value="EDL75001.1"/>
    <property type="molecule type" value="Genomic_DNA"/>
</dbReference>
<dbReference type="EMBL" id="BC168972">
    <property type="protein sequence ID" value="AAI68972.1"/>
    <property type="molecule type" value="mRNA"/>
</dbReference>
<dbReference type="RefSeq" id="NP_001102318.1">
    <property type="nucleotide sequence ID" value="NM_001108848.1"/>
</dbReference>
<dbReference type="SMR" id="B5DF91"/>
<dbReference type="CORUM" id="B5DF91"/>
<dbReference type="FunCoup" id="B5DF91">
    <property type="interactions" value="4102"/>
</dbReference>
<dbReference type="IntAct" id="B5DF91">
    <property type="interactions" value="4"/>
</dbReference>
<dbReference type="STRING" id="10116.ENSRNOP00000001415"/>
<dbReference type="iPTMnet" id="B5DF91"/>
<dbReference type="PhosphoSitePlus" id="B5DF91"/>
<dbReference type="jPOST" id="B5DF91"/>
<dbReference type="PaxDb" id="10116-ENSRNOP00000001415"/>
<dbReference type="PeptideAtlas" id="B5DF91"/>
<dbReference type="Ensembl" id="ENSRNOT00000001415.7">
    <property type="protein sequence ID" value="ENSRNOP00000001415.5"/>
    <property type="gene ID" value="ENSRNOG00000001069.7"/>
</dbReference>
<dbReference type="GeneID" id="363854"/>
<dbReference type="KEGG" id="rno:363854"/>
<dbReference type="UCSC" id="RGD:1308649">
    <property type="organism name" value="rat"/>
</dbReference>
<dbReference type="AGR" id="RGD:1308649"/>
<dbReference type="CTD" id="1994"/>
<dbReference type="RGD" id="1308649">
    <property type="gene designation" value="Elavl1"/>
</dbReference>
<dbReference type="eggNOG" id="KOG0145">
    <property type="taxonomic scope" value="Eukaryota"/>
</dbReference>
<dbReference type="GeneTree" id="ENSGT00940000155528"/>
<dbReference type="HOGENOM" id="CLU_026186_2_2_1"/>
<dbReference type="InParanoid" id="B5DF91"/>
<dbReference type="OMA" id="NQMRYNN"/>
<dbReference type="OrthoDB" id="266020at2759"/>
<dbReference type="PhylomeDB" id="B5DF91"/>
<dbReference type="TreeFam" id="TF313377"/>
<dbReference type="Reactome" id="R-RNO-450520">
    <property type="pathway name" value="HuR (ELAVL1) binds and stabilizes mRNA"/>
</dbReference>
<dbReference type="PRO" id="PR:B5DF91"/>
<dbReference type="Proteomes" id="UP000002494">
    <property type="component" value="Chromosome 12"/>
</dbReference>
<dbReference type="Proteomes" id="UP000234681">
    <property type="component" value="Chromosome 12"/>
</dbReference>
<dbReference type="Bgee" id="ENSRNOG00000001069">
    <property type="expression patterns" value="Expressed in thymus and 20 other cell types or tissues"/>
</dbReference>
<dbReference type="GO" id="GO:0005737">
    <property type="term" value="C:cytoplasm"/>
    <property type="evidence" value="ECO:0000314"/>
    <property type="project" value="ARUK-UCL"/>
</dbReference>
<dbReference type="GO" id="GO:0010494">
    <property type="term" value="C:cytoplasmic stress granule"/>
    <property type="evidence" value="ECO:0000250"/>
    <property type="project" value="UniProtKB"/>
</dbReference>
<dbReference type="GO" id="GO:0031410">
    <property type="term" value="C:cytoplasmic vesicle"/>
    <property type="evidence" value="ECO:0000266"/>
    <property type="project" value="RGD"/>
</dbReference>
<dbReference type="GO" id="GO:0005829">
    <property type="term" value="C:cytosol"/>
    <property type="evidence" value="ECO:0000250"/>
    <property type="project" value="UniProtKB"/>
</dbReference>
<dbReference type="GO" id="GO:0005783">
    <property type="term" value="C:endoplasmic reticulum"/>
    <property type="evidence" value="ECO:0000266"/>
    <property type="project" value="RGD"/>
</dbReference>
<dbReference type="GO" id="GO:0098978">
    <property type="term" value="C:glutamatergic synapse"/>
    <property type="evidence" value="ECO:0000266"/>
    <property type="project" value="RGD"/>
</dbReference>
<dbReference type="GO" id="GO:0005654">
    <property type="term" value="C:nucleoplasm"/>
    <property type="evidence" value="ECO:0000250"/>
    <property type="project" value="UniProtKB"/>
</dbReference>
<dbReference type="GO" id="GO:0005634">
    <property type="term" value="C:nucleus"/>
    <property type="evidence" value="ECO:0000314"/>
    <property type="project" value="ARUK-UCL"/>
</dbReference>
<dbReference type="GO" id="GO:0000932">
    <property type="term" value="C:P-body"/>
    <property type="evidence" value="ECO:0007669"/>
    <property type="project" value="UniProtKB-SubCell"/>
</dbReference>
<dbReference type="GO" id="GO:0098794">
    <property type="term" value="C:postsynapse"/>
    <property type="evidence" value="ECO:0000266"/>
    <property type="project" value="RGD"/>
</dbReference>
<dbReference type="GO" id="GO:1990904">
    <property type="term" value="C:ribonucleoprotein complex"/>
    <property type="evidence" value="ECO:0000250"/>
    <property type="project" value="UniProtKB"/>
</dbReference>
<dbReference type="GO" id="GO:0016528">
    <property type="term" value="C:sarcoplasm"/>
    <property type="evidence" value="ECO:0000266"/>
    <property type="project" value="RGD"/>
</dbReference>
<dbReference type="GO" id="GO:0003725">
    <property type="term" value="F:double-stranded RNA binding"/>
    <property type="evidence" value="ECO:0000266"/>
    <property type="project" value="RGD"/>
</dbReference>
<dbReference type="GO" id="GO:0106222">
    <property type="term" value="F:lncRNA binding"/>
    <property type="evidence" value="ECO:0000266"/>
    <property type="project" value="RGD"/>
</dbReference>
<dbReference type="GO" id="GO:0035198">
    <property type="term" value="F:miRNA binding"/>
    <property type="evidence" value="ECO:0000250"/>
    <property type="project" value="UniProtKB"/>
</dbReference>
<dbReference type="GO" id="GO:0035925">
    <property type="term" value="F:mRNA 3'-UTR AU-rich region binding"/>
    <property type="evidence" value="ECO:0000250"/>
    <property type="project" value="UniProtKB"/>
</dbReference>
<dbReference type="GO" id="GO:0003730">
    <property type="term" value="F:mRNA 3'-UTR binding"/>
    <property type="evidence" value="ECO:0000314"/>
    <property type="project" value="UniProtKB"/>
</dbReference>
<dbReference type="GO" id="GO:0003729">
    <property type="term" value="F:mRNA binding"/>
    <property type="evidence" value="ECO:0000314"/>
    <property type="project" value="RGD"/>
</dbReference>
<dbReference type="GO" id="GO:0042803">
    <property type="term" value="F:protein homodimerization activity"/>
    <property type="evidence" value="ECO:0000266"/>
    <property type="project" value="RGD"/>
</dbReference>
<dbReference type="GO" id="GO:0019901">
    <property type="term" value="F:protein kinase binding"/>
    <property type="evidence" value="ECO:0000353"/>
    <property type="project" value="RGD"/>
</dbReference>
<dbReference type="GO" id="GO:0003723">
    <property type="term" value="F:RNA binding"/>
    <property type="evidence" value="ECO:0000266"/>
    <property type="project" value="RGD"/>
</dbReference>
<dbReference type="GO" id="GO:0070935">
    <property type="term" value="P:3'-UTR-mediated mRNA stabilization"/>
    <property type="evidence" value="ECO:0000250"/>
    <property type="project" value="UniProtKB"/>
</dbReference>
<dbReference type="GO" id="GO:0008283">
    <property type="term" value="P:cell population proliferation"/>
    <property type="evidence" value="ECO:0000315"/>
    <property type="project" value="RGD"/>
</dbReference>
<dbReference type="GO" id="GO:0000512">
    <property type="term" value="P:lncRNA-mediated post-transcriptional gene silencing"/>
    <property type="evidence" value="ECO:0000266"/>
    <property type="project" value="RGD"/>
</dbReference>
<dbReference type="GO" id="GO:0061157">
    <property type="term" value="P:mRNA destabilization"/>
    <property type="evidence" value="ECO:0000315"/>
    <property type="project" value="RGD"/>
</dbReference>
<dbReference type="GO" id="GO:0048255">
    <property type="term" value="P:mRNA stabilization"/>
    <property type="evidence" value="ECO:0000250"/>
    <property type="project" value="UniProtKB"/>
</dbReference>
<dbReference type="GO" id="GO:0060965">
    <property type="term" value="P:negative regulation of miRNA-mediated gene silencing"/>
    <property type="evidence" value="ECO:0000250"/>
    <property type="project" value="UniProtKB"/>
</dbReference>
<dbReference type="GO" id="GO:0045772">
    <property type="term" value="P:positive regulation of autophagosome size"/>
    <property type="evidence" value="ECO:0000315"/>
    <property type="project" value="RGD"/>
</dbReference>
<dbReference type="GO" id="GO:0010508">
    <property type="term" value="P:positive regulation of autophagy"/>
    <property type="evidence" value="ECO:0000315"/>
    <property type="project" value="RGD"/>
</dbReference>
<dbReference type="GO" id="GO:0032930">
    <property type="term" value="P:positive regulation of superoxide anion generation"/>
    <property type="evidence" value="ECO:0000315"/>
    <property type="project" value="RGD"/>
</dbReference>
<dbReference type="GO" id="GO:0045727">
    <property type="term" value="P:positive regulation of translation"/>
    <property type="evidence" value="ECO:0000266"/>
    <property type="project" value="RGD"/>
</dbReference>
<dbReference type="GO" id="GO:0016441">
    <property type="term" value="P:post-transcriptional gene silencing"/>
    <property type="evidence" value="ECO:0000266"/>
    <property type="project" value="RGD"/>
</dbReference>
<dbReference type="GO" id="GO:0051260">
    <property type="term" value="P:protein homooligomerization"/>
    <property type="evidence" value="ECO:0000250"/>
    <property type="project" value="UniProtKB"/>
</dbReference>
<dbReference type="GO" id="GO:0006606">
    <property type="term" value="P:protein import into nucleus"/>
    <property type="evidence" value="ECO:0000266"/>
    <property type="project" value="RGD"/>
</dbReference>
<dbReference type="GO" id="GO:2000036">
    <property type="term" value="P:regulation of stem cell population maintenance"/>
    <property type="evidence" value="ECO:0000266"/>
    <property type="project" value="RGD"/>
</dbReference>
<dbReference type="GO" id="GO:0009749">
    <property type="term" value="P:response to glucose"/>
    <property type="evidence" value="ECO:0000270"/>
    <property type="project" value="RGD"/>
</dbReference>
<dbReference type="CDD" id="cd12769">
    <property type="entry name" value="RRM1_HuR"/>
    <property type="match status" value="1"/>
</dbReference>
<dbReference type="CDD" id="cd12773">
    <property type="entry name" value="RRM2_HuR"/>
    <property type="match status" value="1"/>
</dbReference>
<dbReference type="CDD" id="cd12653">
    <property type="entry name" value="RRM3_HuR"/>
    <property type="match status" value="1"/>
</dbReference>
<dbReference type="FunFam" id="3.30.70.330:FF:000006">
    <property type="entry name" value="ELAV-like 3"/>
    <property type="match status" value="1"/>
</dbReference>
<dbReference type="FunFam" id="3.30.70.330:FF:000005">
    <property type="entry name" value="ELAV-like protein"/>
    <property type="match status" value="1"/>
</dbReference>
<dbReference type="FunFam" id="3.30.70.330:FF:000215">
    <property type="entry name" value="ELAV-like protein"/>
    <property type="match status" value="1"/>
</dbReference>
<dbReference type="Gene3D" id="3.30.70.330">
    <property type="match status" value="3"/>
</dbReference>
<dbReference type="InterPro" id="IPR006548">
    <property type="entry name" value="ELAD_HU_SF"/>
</dbReference>
<dbReference type="InterPro" id="IPR002343">
    <property type="entry name" value="Hud_Sxl_RNA"/>
</dbReference>
<dbReference type="InterPro" id="IPR034996">
    <property type="entry name" value="HuR_RRM2"/>
</dbReference>
<dbReference type="InterPro" id="IPR012677">
    <property type="entry name" value="Nucleotide-bd_a/b_plait_sf"/>
</dbReference>
<dbReference type="InterPro" id="IPR035979">
    <property type="entry name" value="RBD_domain_sf"/>
</dbReference>
<dbReference type="InterPro" id="IPR000504">
    <property type="entry name" value="RRM_dom"/>
</dbReference>
<dbReference type="NCBIfam" id="TIGR01661">
    <property type="entry name" value="ELAV_HUD_SF"/>
    <property type="match status" value="1"/>
</dbReference>
<dbReference type="PANTHER" id="PTHR10352">
    <property type="entry name" value="EUKARYOTIC TRANSLATION INITIATION FACTOR 3 SUBUNIT G"/>
    <property type="match status" value="1"/>
</dbReference>
<dbReference type="Pfam" id="PF00076">
    <property type="entry name" value="RRM_1"/>
    <property type="match status" value="3"/>
</dbReference>
<dbReference type="PRINTS" id="PR00961">
    <property type="entry name" value="HUDSXLRNA"/>
</dbReference>
<dbReference type="SMART" id="SM00360">
    <property type="entry name" value="RRM"/>
    <property type="match status" value="3"/>
</dbReference>
<dbReference type="SUPFAM" id="SSF54928">
    <property type="entry name" value="RNA-binding domain, RBD"/>
    <property type="match status" value="2"/>
</dbReference>
<dbReference type="PROSITE" id="PS50102">
    <property type="entry name" value="RRM"/>
    <property type="match status" value="3"/>
</dbReference>
<comment type="function">
    <text evidence="1 2">RNA-binding protein that binds to the 3'-UTR region of mRNAs and increases their stability (By similarity). Involved in embryonic stem cell (ESC) differentiation: preferentially binds mRNAs that are not methylated by N6-methyladenosine (m6A), stabilizing them, promoting ESC differentiation (By similarity). Has also been shown to be capable of binding to m6A-containing mRNAs and contributes to MYC stability by binding to m6A-containing MYC mRNAs (By similarity). Binds to poly-U elements and AU-rich elements (AREs) in the 3'-UTR of target mRNAs. Binds avidly to the AU-rich element in FOS and IL3/interleukin-3 mRNAs. In the case of the FOS AU-rich element, binds to a core element of 27 nucleotides that contain AUUUA, AUUUUA, and AUUUUUA motifs. Binds preferentially to the 5'-UUUU[AG]UUU-3' motif in vitro (By similarity). With ZNF385A, binds the 3'-UTR of p53/TP53 mRNA to control their nuclear export induced by CDKN2A. Hence, may regulate p53/TP53 expression and mediate in part the CDKN2A anti-proliferative activity. May also bind with ZNF385A the CCNB1 mRNA (By similarity). Increases the stability of the leptin mRNA harboring an AU-rich element (ARE) in its 3' UTR (By similarity).</text>
</comment>
<comment type="subunit">
    <text evidence="1 2 4">Monomer and homodimer (in vitro). Interacts with ANP32A (By similarity). Interacts with ZNF385A; the interaction is indirect and mRNA-dependent and may regulate p53/TP53 expression (By similarity). Identified in a mRNP complex, at least composed of DHX9, DDX3X, ELAVL1, HNRNPU, IGF2BP1, ILF3, PABPC1, PCBP2, PTBP2, STAU1, STAU2, SYNCRIP and YBX1. Interacts with AGO1 and AGO2. Interacts with IGF2BP1. Interacts with IGF2BP2 and IGF2BP3 (By similarity). Interacts with HNRNPL (PubMed:18161049). Interacts with DHX36; this interaction occurs in a RNA-dependent manner. Interacts with ILF3; this interaction occurs in a RNA-dependent manner (By similarity). Interacts with PLEKHN1 (By similarity). Interacts with SHFL; the interaction increases in presence of RNA (By similarity). Interacts with YBX1; interaction recruits ELAVL1 on C5-methylcytosine (m5C)-containing mRNAs, thereby promoting mRNA stability (By similarity). Interacts with FXR1 (By similarity).</text>
</comment>
<comment type="subcellular location">
    <subcellularLocation>
        <location evidence="4">Cytoplasm</location>
    </subcellularLocation>
    <subcellularLocation>
        <location evidence="2">Nucleus</location>
    </subcellularLocation>
    <subcellularLocation>
        <location evidence="1">Cytoplasm</location>
        <location evidence="1">Stress granule</location>
    </subcellularLocation>
    <subcellularLocation>
        <location evidence="2">Cytoplasm</location>
        <location evidence="2">P-body</location>
    </subcellularLocation>
    <text evidence="2">Translocates into the cytoplasm following phosphorylation by MAPKAPK2. Likewise, phosphorylation by PRKCD promotes translocation from the nucleus into the cytoplasm, where it is associated with free and cytoskeleton-bound polysomes. Localizes to the stress granules in the presence of PLEKHN1.</text>
</comment>
<comment type="domain">
    <text evidence="2">The first RRM (RNA recognition motif) domain is essential for binding to AU-rich elements.</text>
</comment>
<comment type="PTM">
    <text evidence="2">Phosphorylated by MAPKAPK2. Phosphorylated by PRKCD.</text>
</comment>
<comment type="PTM">
    <text evidence="2">Methylated at Arg-217 by CARM1 in macrophages in response to LPS challenge.</text>
</comment>
<comment type="similarity">
    <text evidence="5">Belongs to the RRM elav family.</text>
</comment>